<proteinExistence type="inferred from homology"/>
<keyword id="KW-0010">Activator</keyword>
<keyword id="KW-0238">DNA-binding</keyword>
<keyword id="KW-0804">Transcription</keyword>
<keyword id="KW-0805">Transcription regulation</keyword>
<evidence type="ECO:0000255" key="1">
    <source>
        <dbReference type="HAMAP-Rule" id="MF_00166"/>
    </source>
</evidence>
<sequence length="98" mass="11239">MFEQRVNSDVLTVATVNSQDQVTQKPLRDSVKQALKNYFAQLNGQDVNDLYELVLAEVEQPLLDMVMQYTRGNQTRAAQMMGINRGTLRKKLKKYGMN</sequence>
<organism>
    <name type="scientific">Proteus hauseri</name>
    <dbReference type="NCBI Taxonomy" id="183417"/>
    <lineage>
        <taxon>Bacteria</taxon>
        <taxon>Pseudomonadati</taxon>
        <taxon>Pseudomonadota</taxon>
        <taxon>Gammaproteobacteria</taxon>
        <taxon>Enterobacterales</taxon>
        <taxon>Morganellaceae</taxon>
        <taxon>Proteus</taxon>
    </lineage>
</organism>
<reference key="1">
    <citation type="submission" date="2002-12" db="EMBL/GenBank/DDBJ databases">
        <title>Culture-independent analysis of enterobacterial growth state by single cell mRNA profiling.</title>
        <authorList>
            <person name="Chen H."/>
            <person name="Ponniah G."/>
            <person name="Blum P."/>
        </authorList>
    </citation>
    <scope>NUCLEOTIDE SEQUENCE [GENOMIC DNA]</scope>
    <source>
        <strain>ATCC 13315 / DSM 30118 / JCM 1668 / NBRC 3851 / NCIMB 4175 / NCTC 4175 / NRRL B-3405</strain>
    </source>
</reference>
<dbReference type="EMBL" id="AY191362">
    <property type="protein sequence ID" value="AAO47737.1"/>
    <property type="molecule type" value="Genomic_DNA"/>
</dbReference>
<dbReference type="RefSeq" id="WP_004245342.1">
    <property type="nucleotide sequence ID" value="NZ_PGWU01000002.1"/>
</dbReference>
<dbReference type="SMR" id="P0CW84"/>
<dbReference type="STRING" id="1354271.M997_0828"/>
<dbReference type="GeneID" id="93395611"/>
<dbReference type="OrthoDB" id="9802388at2"/>
<dbReference type="GO" id="GO:0003700">
    <property type="term" value="F:DNA-binding transcription factor activity"/>
    <property type="evidence" value="ECO:0007669"/>
    <property type="project" value="UniProtKB-UniRule"/>
</dbReference>
<dbReference type="GO" id="GO:0043565">
    <property type="term" value="F:sequence-specific DNA binding"/>
    <property type="evidence" value="ECO:0007669"/>
    <property type="project" value="InterPro"/>
</dbReference>
<dbReference type="FunFam" id="1.10.10.60:FF:000006">
    <property type="entry name" value="DNA-binding protein Fis"/>
    <property type="match status" value="1"/>
</dbReference>
<dbReference type="Gene3D" id="1.10.10.60">
    <property type="entry name" value="Homeodomain-like"/>
    <property type="match status" value="1"/>
</dbReference>
<dbReference type="HAMAP" id="MF_00166">
    <property type="entry name" value="DNA_binding_Fis"/>
    <property type="match status" value="1"/>
</dbReference>
<dbReference type="InterPro" id="IPR005412">
    <property type="entry name" value="Fis_DNA-bd"/>
</dbReference>
<dbReference type="InterPro" id="IPR009057">
    <property type="entry name" value="Homeodomain-like_sf"/>
</dbReference>
<dbReference type="InterPro" id="IPR002197">
    <property type="entry name" value="HTH_Fis"/>
</dbReference>
<dbReference type="InterPro" id="IPR050207">
    <property type="entry name" value="Trans_regulatory_Fis"/>
</dbReference>
<dbReference type="NCBIfam" id="NF001659">
    <property type="entry name" value="PRK00430.1"/>
    <property type="match status" value="1"/>
</dbReference>
<dbReference type="PANTHER" id="PTHR47918">
    <property type="entry name" value="DNA-BINDING PROTEIN FIS"/>
    <property type="match status" value="1"/>
</dbReference>
<dbReference type="PANTHER" id="PTHR47918:SF1">
    <property type="entry name" value="DNA-BINDING PROTEIN FIS"/>
    <property type="match status" value="1"/>
</dbReference>
<dbReference type="Pfam" id="PF02954">
    <property type="entry name" value="HTH_8"/>
    <property type="match status" value="1"/>
</dbReference>
<dbReference type="PIRSF" id="PIRSF002097">
    <property type="entry name" value="DNA-binding_Fis"/>
    <property type="match status" value="1"/>
</dbReference>
<dbReference type="PRINTS" id="PR01591">
    <property type="entry name" value="DNABINDNGFIS"/>
</dbReference>
<dbReference type="PRINTS" id="PR01590">
    <property type="entry name" value="HTHFIS"/>
</dbReference>
<dbReference type="SUPFAM" id="SSF46689">
    <property type="entry name" value="Homeodomain-like"/>
    <property type="match status" value="1"/>
</dbReference>
<protein>
    <recommendedName>
        <fullName evidence="1">DNA-binding protein Fis</fullName>
    </recommendedName>
</protein>
<gene>
    <name evidence="1" type="primary">fis</name>
</gene>
<name>FIS_PROHU</name>
<accession>P0CW84</accession>
<accession>O52534</accession>
<accession>Q84AP2</accession>
<comment type="function">
    <text evidence="1">Activates ribosomal RNA transcription. Plays a direct role in upstream activation of rRNA promoters.</text>
</comment>
<comment type="subunit">
    <text evidence="1">Homodimer.</text>
</comment>
<comment type="similarity">
    <text evidence="1">Belongs to the transcriptional regulatory Fis family.</text>
</comment>
<feature type="chain" id="PRO_0000203891" description="DNA-binding protein Fis">
    <location>
        <begin position="1"/>
        <end position="98"/>
    </location>
</feature>
<feature type="DNA-binding region" description="H-T-H motif" evidence="1">
    <location>
        <begin position="74"/>
        <end position="93"/>
    </location>
</feature>